<gene>
    <name type="primary">SIN4</name>
    <name type="synonym">MED16</name>
    <name type="ordered locus">ABL202W</name>
</gene>
<feature type="chain" id="PRO_0000307623" description="Mediator of RNA polymerase II transcription subunit 16">
    <location>
        <begin position="1"/>
        <end position="938"/>
    </location>
</feature>
<dbReference type="EMBL" id="AE016815">
    <property type="protein sequence ID" value="AAS50569.2"/>
    <property type="molecule type" value="Genomic_DNA"/>
</dbReference>
<dbReference type="RefSeq" id="NP_982745.2">
    <property type="nucleotide sequence ID" value="NM_208098.2"/>
</dbReference>
<dbReference type="SMR" id="Q75E72"/>
<dbReference type="FunCoup" id="Q75E72">
    <property type="interactions" value="308"/>
</dbReference>
<dbReference type="STRING" id="284811.Q75E72"/>
<dbReference type="EnsemblFungi" id="AAS50569">
    <property type="protein sequence ID" value="AAS50569"/>
    <property type="gene ID" value="AGOS_ABL202W"/>
</dbReference>
<dbReference type="GeneID" id="4618824"/>
<dbReference type="KEGG" id="ago:AGOS_ABL202W"/>
<dbReference type="eggNOG" id="ENOG502QWAC">
    <property type="taxonomic scope" value="Eukaryota"/>
</dbReference>
<dbReference type="HOGENOM" id="CLU_311703_0_0_1"/>
<dbReference type="InParanoid" id="Q75E72"/>
<dbReference type="OMA" id="FDTTWLG"/>
<dbReference type="OrthoDB" id="4139168at2759"/>
<dbReference type="Proteomes" id="UP000000591">
    <property type="component" value="Chromosome II"/>
</dbReference>
<dbReference type="GO" id="GO:0070847">
    <property type="term" value="C:core mediator complex"/>
    <property type="evidence" value="ECO:0007669"/>
    <property type="project" value="EnsemblFungi"/>
</dbReference>
<dbReference type="GO" id="GO:0016592">
    <property type="term" value="C:mediator complex"/>
    <property type="evidence" value="ECO:0007669"/>
    <property type="project" value="EnsemblFungi"/>
</dbReference>
<dbReference type="GO" id="GO:0061629">
    <property type="term" value="F:RNA polymerase II-specific DNA-binding transcription factor binding"/>
    <property type="evidence" value="ECO:0007669"/>
    <property type="project" value="EnsemblFungi"/>
</dbReference>
<dbReference type="GO" id="GO:0034605">
    <property type="term" value="P:cellular response to heat"/>
    <property type="evidence" value="ECO:0007669"/>
    <property type="project" value="EnsemblFungi"/>
</dbReference>
<dbReference type="GO" id="GO:0000122">
    <property type="term" value="P:negative regulation of transcription by RNA polymerase II"/>
    <property type="evidence" value="ECO:0007669"/>
    <property type="project" value="EnsemblFungi"/>
</dbReference>
<dbReference type="GO" id="GO:0032968">
    <property type="term" value="P:positive regulation of transcription elongation by RNA polymerase II"/>
    <property type="evidence" value="ECO:0007669"/>
    <property type="project" value="EnsemblFungi"/>
</dbReference>
<dbReference type="GO" id="GO:0060261">
    <property type="term" value="P:positive regulation of transcription initiation by RNA polymerase II"/>
    <property type="evidence" value="ECO:0007669"/>
    <property type="project" value="EnsemblFungi"/>
</dbReference>
<dbReference type="GO" id="GO:0070202">
    <property type="term" value="P:regulation of establishment of protein localization to chromosome"/>
    <property type="evidence" value="ECO:0007669"/>
    <property type="project" value="EnsemblFungi"/>
</dbReference>
<dbReference type="GO" id="GO:0051123">
    <property type="term" value="P:RNA polymerase II preinitiation complex assembly"/>
    <property type="evidence" value="ECO:0007669"/>
    <property type="project" value="EnsemblFungi"/>
</dbReference>
<dbReference type="InterPro" id="IPR048338">
    <property type="entry name" value="Mediator_Med16"/>
</dbReference>
<dbReference type="InterPro" id="IPR048339">
    <property type="entry name" value="Mediator_Med16_C"/>
</dbReference>
<dbReference type="InterPro" id="IPR021665">
    <property type="entry name" value="Mediator_Med16_N"/>
</dbReference>
<dbReference type="PANTHER" id="PTHR13224:SF6">
    <property type="entry name" value="MEDIATOR OF RNA POLYMERASE II TRANSCRIPTION SUBUNIT 16"/>
    <property type="match status" value="1"/>
</dbReference>
<dbReference type="PANTHER" id="PTHR13224">
    <property type="entry name" value="THYROID HORMONE RECEPTOR-ASSOCIATED PROTEIN-RELATED"/>
    <property type="match status" value="1"/>
</dbReference>
<dbReference type="Pfam" id="PF20719">
    <property type="entry name" value="Med16_C"/>
    <property type="match status" value="1"/>
</dbReference>
<dbReference type="Pfam" id="PF11635">
    <property type="entry name" value="Med16_N"/>
    <property type="match status" value="1"/>
</dbReference>
<organism>
    <name type="scientific">Eremothecium gossypii (strain ATCC 10895 / CBS 109.51 / FGSC 9923 / NRRL Y-1056)</name>
    <name type="common">Yeast</name>
    <name type="synonym">Ashbya gossypii</name>
    <dbReference type="NCBI Taxonomy" id="284811"/>
    <lineage>
        <taxon>Eukaryota</taxon>
        <taxon>Fungi</taxon>
        <taxon>Dikarya</taxon>
        <taxon>Ascomycota</taxon>
        <taxon>Saccharomycotina</taxon>
        <taxon>Saccharomycetes</taxon>
        <taxon>Saccharomycetales</taxon>
        <taxon>Saccharomycetaceae</taxon>
        <taxon>Eremothecium</taxon>
    </lineage>
</organism>
<accession>Q75E72</accession>
<protein>
    <recommendedName>
        <fullName>Mediator of RNA polymerase II transcription subunit 16</fullName>
    </recommendedName>
    <alternativeName>
        <fullName>Mediator complex subunit 16</fullName>
    </alternativeName>
</protein>
<name>MED16_EREGS</name>
<keyword id="KW-0010">Activator</keyword>
<keyword id="KW-0539">Nucleus</keyword>
<keyword id="KW-1185">Reference proteome</keyword>
<keyword id="KW-0804">Transcription</keyword>
<keyword id="KW-0805">Transcription regulation</keyword>
<evidence type="ECO:0000250" key="1"/>
<evidence type="ECO:0000305" key="2"/>
<comment type="function">
    <text evidence="1">Component of the Mediator complex, a coactivator involved in the regulated transcription of nearly all RNA polymerase II-dependent genes. Mediator functions as a bridge to convey information from gene-specific regulatory proteins to the basal RNA polymerase II transcription machinery. Mediator is recruited to promoters by direct interactions with regulatory proteins and serves as a scaffold for the assembly of a functional preinitiation complex with RNA polymerase II and the general transcription factors (By similarity).</text>
</comment>
<comment type="subunit">
    <text evidence="1">Component of the Mediator complex.</text>
</comment>
<comment type="subcellular location">
    <subcellularLocation>
        <location evidence="2">Nucleus</location>
    </subcellularLocation>
</comment>
<comment type="similarity">
    <text evidence="2">Belongs to the Mediator complex subunit 16 family.</text>
</comment>
<reference key="1">
    <citation type="journal article" date="2004" name="Science">
        <title>The Ashbya gossypii genome as a tool for mapping the ancient Saccharomyces cerevisiae genome.</title>
        <authorList>
            <person name="Dietrich F.S."/>
            <person name="Voegeli S."/>
            <person name="Brachat S."/>
            <person name="Lerch A."/>
            <person name="Gates K."/>
            <person name="Steiner S."/>
            <person name="Mohr C."/>
            <person name="Poehlmann R."/>
            <person name="Luedi P."/>
            <person name="Choi S."/>
            <person name="Wing R.A."/>
            <person name="Flavier A."/>
            <person name="Gaffney T.D."/>
            <person name="Philippsen P."/>
        </authorList>
    </citation>
    <scope>NUCLEOTIDE SEQUENCE [LARGE SCALE GENOMIC DNA]</scope>
    <source>
        <strain>ATCC 10895 / CBS 109.51 / FGSC 9923 / NRRL Y-1056</strain>
    </source>
</reference>
<reference key="2">
    <citation type="journal article" date="2013" name="G3 (Bethesda)">
        <title>Genomes of Ashbya fungi isolated from insects reveal four mating-type loci, numerous translocations, lack of transposons, and distinct gene duplications.</title>
        <authorList>
            <person name="Dietrich F.S."/>
            <person name="Voegeli S."/>
            <person name="Kuo S."/>
            <person name="Philippsen P."/>
        </authorList>
    </citation>
    <scope>GENOME REANNOTATION</scope>
    <scope>SEQUENCE REVISION TO 282</scope>
    <source>
        <strain>ATCC 10895 / CBS 109.51 / FGSC 9923 / NRRL Y-1056</strain>
    </source>
</reference>
<sequence>MHLEHLMSSTTAVSWSKIGLIAYGDAQSQDGNLCITFLETVNGSNWRFHPPKKYVIHPQLHEDQSSNGNPKSPLFFHDLRSMHWNNWGLLNGELLAVCDELGNMTVLAAGQGLNGNGAYDRLSVLFQDNIFKIHNQVLPLESVPKKDATPKVERKHTKKEYYSTILDFQWIGNQKPSVAQVAAQRDRTNNIFKNQMHQCPPYGVFHPASIKSACIAIRRNGYIDLWYQFSNTLDFKKISLQLSKDKESEWLQYAQIAHTDKEQCFLIGVFSNVAKSFAFYELLINWNVNTTNQAMFHDPKLTLRHILRVRPDALGPNGELLKLENFHVISKTALPGTRPEILISYNILGTERSLVRRFQMVLSNPDMVFLSSLGLAITALHNNHSVLRYSMKHVQDLTFDSKIMDIQSHSLDALVCFRLHNGRFQLYNRHTWAVESETADAKQIGGYTKDTIISIFGSGFNYPLLPPADAIEWCAISPSSGGIILKLKCKPQPTFYALEQSVLTDPSRDIVHATAFAFEFVRFNNMIHSGEDLAIAAKTHVFRLQRLSEERAVNFIASVIGAILSLYGIHFDGPKEILEKLLQSKAIQKIFLLQMELGSHLKNKNVYSMAYASMKLRSINLAMNGVARNVHAMIQHTAVVNSLPNGRAFQFAFSKQDLIYSLIPSVNWFVSFVTFLTQQLIMLVNNPMDNTHSLVLGILSCITTRHLMLKVILELKNMIGLITKFPETTYTVLNESSRFLRKALGDSPVNLEKFEVFLNEINNKFLSLLDDHGAQSMDREPSFMVKAEIPPALGHVREFLLSFAGSALLAQTNLAEVFFASTHNLRIFDHQHFHPSVANLLQPPEKGLVVDDAILPDACRGSSSFSPLDYDDISSEWVDMSALVRIKRCVRCGCVTRAGNPVAKNNTILETSIVTKRWTALYSRYCQCTGLLYELDTP</sequence>
<proteinExistence type="inferred from homology"/>